<evidence type="ECO:0000250" key="1"/>
<evidence type="ECO:0000255" key="2">
    <source>
        <dbReference type="PROSITE-ProRule" id="PRU00981"/>
    </source>
</evidence>
<comment type="function">
    <text evidence="1">Transcriptional regulator (lacking a basic DNA binding domain) which negatively regulates the basic helix-loop-helix (bHLH) transcription factors by forming heterodimers and inhibiting their DNA binding and transcriptional activity. Implicated in regulating a variety of cellular processes, including cellular growth, senescence, differentiation, apoptosis, angiogenesis, and neoplastic transformation. Involved in myogenesis by inhibiting skeletal muscle and cardiac myocyte differentiation and promoting muscle precursor cells proliferation. Inhibits the binding of E2A-containing protein complexes to muscle creatine kinase E-box enhancer. Regulates the circadian clock by repressing the transcriptional activator activity of the CLOCK-BMAL1 heterodimer (By similarity).</text>
</comment>
<comment type="subunit">
    <text evidence="1">Homodimer, and heterodimer with other HLH proteins. Interacts with COPS5 and COPS7A. Interacts with IFI204. Interacts with GATA4 and NKX2-5. Interacts with ANKRD2; both proteins cooperate in myoblast differentiation. Interacts with CLOCK and BMAL1 (By similarity).</text>
</comment>
<comment type="subcellular location">
    <subcellularLocation>
        <location evidence="2">Nucleus</location>
    </subcellularLocation>
</comment>
<dbReference type="EMBL" id="BT021039">
    <property type="protein sequence ID" value="AAX09056.1"/>
    <property type="molecule type" value="mRNA"/>
</dbReference>
<dbReference type="EMBL" id="BC102157">
    <property type="protein sequence ID" value="AAI02158.1"/>
    <property type="molecule type" value="mRNA"/>
</dbReference>
<dbReference type="RefSeq" id="NP_001014950.1">
    <property type="nucleotide sequence ID" value="NM_001014950.1"/>
</dbReference>
<dbReference type="SMR" id="Q5E981"/>
<dbReference type="FunCoup" id="Q5E981">
    <property type="interactions" value="341"/>
</dbReference>
<dbReference type="STRING" id="9913.ENSBTAP00000019148"/>
<dbReference type="PaxDb" id="9913-ENSBTAP00000019148"/>
<dbReference type="Ensembl" id="ENSBTAT00000019148.5">
    <property type="protein sequence ID" value="ENSBTAP00000019148.3"/>
    <property type="gene ID" value="ENSBTAG00000030425.4"/>
</dbReference>
<dbReference type="GeneID" id="538690"/>
<dbReference type="KEGG" id="bta:538690"/>
<dbReference type="CTD" id="3399"/>
<dbReference type="VEuPathDB" id="HostDB:ENSBTAG00000030425"/>
<dbReference type="VGNC" id="VGNC:30032">
    <property type="gene designation" value="ID3"/>
</dbReference>
<dbReference type="eggNOG" id="ENOG502S53I">
    <property type="taxonomic scope" value="Eukaryota"/>
</dbReference>
<dbReference type="GeneTree" id="ENSGT00940000160504"/>
<dbReference type="HOGENOM" id="CLU_116790_1_0_1"/>
<dbReference type="InParanoid" id="Q5E981"/>
<dbReference type="OMA" id="PARGCYE"/>
<dbReference type="OrthoDB" id="10047910at2759"/>
<dbReference type="TreeFam" id="TF326217"/>
<dbReference type="Proteomes" id="UP000009136">
    <property type="component" value="Chromosome 2"/>
</dbReference>
<dbReference type="Bgee" id="ENSBTAG00000030425">
    <property type="expression patterns" value="Expressed in oocyte and 111 other cell types or tissues"/>
</dbReference>
<dbReference type="GO" id="GO:0005737">
    <property type="term" value="C:cytoplasm"/>
    <property type="evidence" value="ECO:0007669"/>
    <property type="project" value="Ensembl"/>
</dbReference>
<dbReference type="GO" id="GO:0005634">
    <property type="term" value="C:nucleus"/>
    <property type="evidence" value="ECO:0000318"/>
    <property type="project" value="GO_Central"/>
</dbReference>
<dbReference type="GO" id="GO:0043425">
    <property type="term" value="F:bHLH transcription factor binding"/>
    <property type="evidence" value="ECO:0007669"/>
    <property type="project" value="Ensembl"/>
</dbReference>
<dbReference type="GO" id="GO:1901707">
    <property type="term" value="F:leptomycin B binding"/>
    <property type="evidence" value="ECO:0007669"/>
    <property type="project" value="Ensembl"/>
</dbReference>
<dbReference type="GO" id="GO:0046983">
    <property type="term" value="F:protein dimerization activity"/>
    <property type="evidence" value="ECO:0007669"/>
    <property type="project" value="InterPro"/>
</dbReference>
<dbReference type="GO" id="GO:0019904">
    <property type="term" value="F:protein domain specific binding"/>
    <property type="evidence" value="ECO:0007669"/>
    <property type="project" value="Ensembl"/>
</dbReference>
<dbReference type="GO" id="GO:0003714">
    <property type="term" value="F:transcription corepressor activity"/>
    <property type="evidence" value="ECO:0000318"/>
    <property type="project" value="GO_Central"/>
</dbReference>
<dbReference type="GO" id="GO:0140416">
    <property type="term" value="F:transcription regulator inhibitor activity"/>
    <property type="evidence" value="ECO:0007669"/>
    <property type="project" value="Ensembl"/>
</dbReference>
<dbReference type="GO" id="GO:0072750">
    <property type="term" value="P:cellular response to leptomycin B"/>
    <property type="evidence" value="ECO:0007669"/>
    <property type="project" value="Ensembl"/>
</dbReference>
<dbReference type="GO" id="GO:0007417">
    <property type="term" value="P:central nervous system development"/>
    <property type="evidence" value="ECO:0007669"/>
    <property type="project" value="Ensembl"/>
</dbReference>
<dbReference type="GO" id="GO:0007623">
    <property type="term" value="P:circadian rhythm"/>
    <property type="evidence" value="ECO:0007669"/>
    <property type="project" value="Ensembl"/>
</dbReference>
<dbReference type="GO" id="GO:0030855">
    <property type="term" value="P:epithelial cell differentiation"/>
    <property type="evidence" value="ECO:0007669"/>
    <property type="project" value="Ensembl"/>
</dbReference>
<dbReference type="GO" id="GO:0007507">
    <property type="term" value="P:heart development"/>
    <property type="evidence" value="ECO:0007669"/>
    <property type="project" value="Ensembl"/>
</dbReference>
<dbReference type="GO" id="GO:0001656">
    <property type="term" value="P:metanephros development"/>
    <property type="evidence" value="ECO:0007669"/>
    <property type="project" value="Ensembl"/>
</dbReference>
<dbReference type="GO" id="GO:0007517">
    <property type="term" value="P:muscle organ development"/>
    <property type="evidence" value="ECO:0007669"/>
    <property type="project" value="UniProtKB-KW"/>
</dbReference>
<dbReference type="GO" id="GO:0045892">
    <property type="term" value="P:negative regulation of DNA-templated transcription"/>
    <property type="evidence" value="ECO:0000250"/>
    <property type="project" value="UniProtKB"/>
</dbReference>
<dbReference type="GO" id="GO:0010629">
    <property type="term" value="P:negative regulation of gene expression"/>
    <property type="evidence" value="ECO:0007669"/>
    <property type="project" value="Ensembl"/>
</dbReference>
<dbReference type="GO" id="GO:0045662">
    <property type="term" value="P:negative regulation of myoblast differentiation"/>
    <property type="evidence" value="ECO:0007669"/>
    <property type="project" value="Ensembl"/>
</dbReference>
<dbReference type="GO" id="GO:0045668">
    <property type="term" value="P:negative regulation of osteoblast differentiation"/>
    <property type="evidence" value="ECO:0007669"/>
    <property type="project" value="Ensembl"/>
</dbReference>
<dbReference type="GO" id="GO:0000122">
    <property type="term" value="P:negative regulation of transcription by RNA polymerase II"/>
    <property type="evidence" value="ECO:0000318"/>
    <property type="project" value="GO_Central"/>
</dbReference>
<dbReference type="GO" id="GO:0030182">
    <property type="term" value="P:neuron differentiation"/>
    <property type="evidence" value="ECO:0000318"/>
    <property type="project" value="GO_Central"/>
</dbReference>
<dbReference type="GO" id="GO:0030903">
    <property type="term" value="P:notochord development"/>
    <property type="evidence" value="ECO:0007669"/>
    <property type="project" value="Ensembl"/>
</dbReference>
<dbReference type="GO" id="GO:0042476">
    <property type="term" value="P:odontogenesis"/>
    <property type="evidence" value="ECO:0007669"/>
    <property type="project" value="Ensembl"/>
</dbReference>
<dbReference type="GO" id="GO:0010628">
    <property type="term" value="P:positive regulation of gene expression"/>
    <property type="evidence" value="ECO:0007669"/>
    <property type="project" value="Ensembl"/>
</dbReference>
<dbReference type="CDD" id="cd19693">
    <property type="entry name" value="bHLH_dnHLH_ID3"/>
    <property type="match status" value="1"/>
</dbReference>
<dbReference type="FunFam" id="4.10.280.10:FF:000039">
    <property type="entry name" value="DNA-binding protein inhibitor ID-3"/>
    <property type="match status" value="1"/>
</dbReference>
<dbReference type="Gene3D" id="4.10.280.10">
    <property type="entry name" value="Helix-loop-helix DNA-binding domain"/>
    <property type="match status" value="1"/>
</dbReference>
<dbReference type="InterPro" id="IPR011598">
    <property type="entry name" value="bHLH_dom"/>
</dbReference>
<dbReference type="InterPro" id="IPR026052">
    <property type="entry name" value="DNA-bd_prot-inh"/>
</dbReference>
<dbReference type="InterPro" id="IPR036638">
    <property type="entry name" value="HLH_DNA-bd_sf"/>
</dbReference>
<dbReference type="PANTHER" id="PTHR11723">
    <property type="entry name" value="DNA-BINDING PROTEIN INHIBITOR"/>
    <property type="match status" value="1"/>
</dbReference>
<dbReference type="PANTHER" id="PTHR11723:SF16">
    <property type="entry name" value="DNA-BINDING PROTEIN INHIBITOR ID-3"/>
    <property type="match status" value="1"/>
</dbReference>
<dbReference type="Pfam" id="PF00010">
    <property type="entry name" value="HLH"/>
    <property type="match status" value="1"/>
</dbReference>
<dbReference type="SMART" id="SM00353">
    <property type="entry name" value="HLH"/>
    <property type="match status" value="1"/>
</dbReference>
<dbReference type="SUPFAM" id="SSF47459">
    <property type="entry name" value="HLH, helix-loop-helix DNA-binding domain"/>
    <property type="match status" value="1"/>
</dbReference>
<dbReference type="PROSITE" id="PS50888">
    <property type="entry name" value="BHLH"/>
    <property type="match status" value="1"/>
</dbReference>
<sequence length="119" mass="12999">MKALSPVRGCYEAVCCLSERSLAIARGRGKSPAAEEPLSLLDDMNHCYSRLRELVPGVPRGTQLSQVEILQRVIDYILDLQVVLAEPAPGPPDGPHLPIQTAELAPELVISNDQRSFCH</sequence>
<reference key="1">
    <citation type="journal article" date="2005" name="BMC Genomics">
        <title>Characterization of 954 bovine full-CDS cDNA sequences.</title>
        <authorList>
            <person name="Harhay G.P."/>
            <person name="Sonstegard T.S."/>
            <person name="Keele J.W."/>
            <person name="Heaton M.P."/>
            <person name="Clawson M.L."/>
            <person name="Snelling W.M."/>
            <person name="Wiedmann R.T."/>
            <person name="Van Tassell C.P."/>
            <person name="Smith T.P.L."/>
        </authorList>
    </citation>
    <scope>NUCLEOTIDE SEQUENCE [LARGE SCALE MRNA]</scope>
</reference>
<reference key="2">
    <citation type="submission" date="2005-08" db="EMBL/GenBank/DDBJ databases">
        <authorList>
            <consortium name="NIH - Mammalian Gene Collection (MGC) project"/>
        </authorList>
    </citation>
    <scope>NUCLEOTIDE SEQUENCE [LARGE SCALE MRNA]</scope>
    <source>
        <strain>Crossbred X Angus</strain>
        <tissue>Ileum</tissue>
    </source>
</reference>
<name>ID3_BOVIN</name>
<gene>
    <name type="primary">ID3</name>
</gene>
<organism>
    <name type="scientific">Bos taurus</name>
    <name type="common">Bovine</name>
    <dbReference type="NCBI Taxonomy" id="9913"/>
    <lineage>
        <taxon>Eukaryota</taxon>
        <taxon>Metazoa</taxon>
        <taxon>Chordata</taxon>
        <taxon>Craniata</taxon>
        <taxon>Vertebrata</taxon>
        <taxon>Euteleostomi</taxon>
        <taxon>Mammalia</taxon>
        <taxon>Eutheria</taxon>
        <taxon>Laurasiatheria</taxon>
        <taxon>Artiodactyla</taxon>
        <taxon>Ruminantia</taxon>
        <taxon>Pecora</taxon>
        <taxon>Bovidae</taxon>
        <taxon>Bovinae</taxon>
        <taxon>Bos</taxon>
    </lineage>
</organism>
<accession>Q5E981</accession>
<accession>Q3T121</accession>
<keyword id="KW-0090">Biological rhythms</keyword>
<keyword id="KW-0517">Myogenesis</keyword>
<keyword id="KW-0539">Nucleus</keyword>
<keyword id="KW-1185">Reference proteome</keyword>
<keyword id="KW-0678">Repressor</keyword>
<keyword id="KW-0804">Transcription</keyword>
<keyword id="KW-0805">Transcription regulation</keyword>
<proteinExistence type="inferred from homology"/>
<feature type="chain" id="PRO_0000127245" description="DNA-binding protein inhibitor ID-3">
    <location>
        <begin position="1"/>
        <end position="119"/>
    </location>
</feature>
<feature type="domain" description="bHLH" evidence="2">
    <location>
        <begin position="28"/>
        <end position="80"/>
    </location>
</feature>
<protein>
    <recommendedName>
        <fullName>DNA-binding protein inhibitor ID-3</fullName>
    </recommendedName>
    <alternativeName>
        <fullName>Inhibitor of DNA binding 3</fullName>
    </alternativeName>
    <alternativeName>
        <fullName>Inhibitor of differentiation 3</fullName>
    </alternativeName>
</protein>